<protein>
    <recommendedName>
        <fullName>Chloramphenicol resistance protein</fullName>
    </recommendedName>
</protein>
<geneLocation type="plasmid">
    <name>R1033</name>
</geneLocation>
<accession>P32482</accession>
<accession>Q56411</accession>
<accession>Q56412</accession>
<gene>
    <name type="primary">cmlA</name>
</gene>
<evidence type="ECO:0000255" key="1"/>
<evidence type="ECO:0000305" key="2"/>
<dbReference type="EMBL" id="M64556">
    <property type="protein sequence ID" value="AAA26057.1"/>
    <property type="molecule type" value="Genomic_DNA"/>
</dbReference>
<dbReference type="EMBL" id="U12338">
    <property type="protein sequence ID" value="AAB60004.2"/>
    <property type="molecule type" value="Genomic_DNA"/>
</dbReference>
<dbReference type="PIR" id="A47033">
    <property type="entry name" value="A47033"/>
</dbReference>
<dbReference type="SMR" id="P32482"/>
<dbReference type="TCDB" id="2.A.1.2.3">
    <property type="family name" value="the major facilitator superfamily (mfs)"/>
</dbReference>
<dbReference type="KEGG" id="ag:AAB60004"/>
<dbReference type="GO" id="GO:0005886">
    <property type="term" value="C:plasma membrane"/>
    <property type="evidence" value="ECO:0007669"/>
    <property type="project" value="UniProtKB-SubCell"/>
</dbReference>
<dbReference type="GO" id="GO:0042910">
    <property type="term" value="F:xenobiotic transmembrane transporter activity"/>
    <property type="evidence" value="ECO:0007669"/>
    <property type="project" value="InterPro"/>
</dbReference>
<dbReference type="GO" id="GO:0046677">
    <property type="term" value="P:response to antibiotic"/>
    <property type="evidence" value="ECO:0007669"/>
    <property type="project" value="UniProtKB-KW"/>
</dbReference>
<dbReference type="GO" id="GO:1990961">
    <property type="term" value="P:xenobiotic detoxification by transmembrane export across the plasma membrane"/>
    <property type="evidence" value="ECO:0007669"/>
    <property type="project" value="InterPro"/>
</dbReference>
<dbReference type="CDD" id="cd17320">
    <property type="entry name" value="MFS_MdfA_MDR_like"/>
    <property type="match status" value="1"/>
</dbReference>
<dbReference type="Gene3D" id="1.20.1720.10">
    <property type="entry name" value="Multidrug resistance protein D"/>
    <property type="match status" value="1"/>
</dbReference>
<dbReference type="InterPro" id="IPR004812">
    <property type="entry name" value="Efflux_drug-R_Bcr/CmlA"/>
</dbReference>
<dbReference type="InterPro" id="IPR011701">
    <property type="entry name" value="MFS"/>
</dbReference>
<dbReference type="InterPro" id="IPR020846">
    <property type="entry name" value="MFS_dom"/>
</dbReference>
<dbReference type="InterPro" id="IPR036259">
    <property type="entry name" value="MFS_trans_sf"/>
</dbReference>
<dbReference type="NCBIfam" id="NF033134">
    <property type="entry name" value="cmlA_floR"/>
    <property type="match status" value="1"/>
</dbReference>
<dbReference type="NCBIfam" id="TIGR00710">
    <property type="entry name" value="efflux_Bcr_CflA"/>
    <property type="match status" value="1"/>
</dbReference>
<dbReference type="NCBIfam" id="NF000509">
    <property type="entry name" value="efflux_CmlA"/>
    <property type="match status" value="1"/>
</dbReference>
<dbReference type="PANTHER" id="PTHR42718">
    <property type="entry name" value="MAJOR FACILITATOR SUPERFAMILY MULTIDRUG TRANSPORTER MFSC"/>
    <property type="match status" value="1"/>
</dbReference>
<dbReference type="PANTHER" id="PTHR42718:SF9">
    <property type="entry name" value="MAJOR FACILITATOR SUPERFAMILY MULTIDRUG TRANSPORTER MFSC"/>
    <property type="match status" value="1"/>
</dbReference>
<dbReference type="Pfam" id="PF07690">
    <property type="entry name" value="MFS_1"/>
    <property type="match status" value="1"/>
</dbReference>
<dbReference type="PRINTS" id="PR01036">
    <property type="entry name" value="TCRTETB"/>
</dbReference>
<dbReference type="SUPFAM" id="SSF103473">
    <property type="entry name" value="MFS general substrate transporter"/>
    <property type="match status" value="1"/>
</dbReference>
<dbReference type="PROSITE" id="PS50850">
    <property type="entry name" value="MFS"/>
    <property type="match status" value="1"/>
</dbReference>
<keyword id="KW-0046">Antibiotic resistance</keyword>
<keyword id="KW-0997">Cell inner membrane</keyword>
<keyword id="KW-1003">Cell membrane</keyword>
<keyword id="KW-0472">Membrane</keyword>
<keyword id="KW-0614">Plasmid</keyword>
<keyword id="KW-0812">Transmembrane</keyword>
<keyword id="KW-1133">Transmembrane helix</keyword>
<keyword id="KW-0813">Transport</keyword>
<keyword id="KW-0814">Transposable element</keyword>
<comment type="function">
    <text>Appears to provoke a reduction of the content of the major porins OmpA and OmpC.</text>
</comment>
<comment type="subcellular location">
    <subcellularLocation>
        <location>Cell inner membrane</location>
        <topology>Multi-pass membrane protein</topology>
    </subcellularLocation>
</comment>
<comment type="similarity">
    <text evidence="2">Belongs to the major facilitator superfamily. Bcr/CmlA family.</text>
</comment>
<sequence>MSSKNFSWRYSLAATVLLLSPFDLLASLGMDMYLPAVPFMPNALGTTASTIQLTLTTYLVMIGAGQLLFGPLSDRLGRRPVLLGGGLAYVVASMGLALTSSAEVFLGLRILQACGASACLVSTFATVRDIYAGREESNVIYGILGSMLAMVPAVGPLLGALVDMWLGWRAIFAFLGLGMIAASAAAWRFWPETRVQRVAGLQWSQLLLPVKCLNFWLYTLCYAAGMGSFFVFFSIAPGLMMGRQGVSQLGFSLLFATVAIAMVFTARFMGRVIPKWGSPSVLRMGMGCLIAGAVLLAITEIWALQSVLGFIAPMWLVGIGVATAVSVAPNGALRGFDHVAGTVTAVYFCLGGVLLGSIGTLIISLLPRNTAWPVVVYCLTLATVVLGLSCVSRVKGSRGQGEHDVVALQSAESTSNPNR</sequence>
<proteinExistence type="inferred from homology"/>
<organism>
    <name type="scientific">Pseudomonas aeruginosa</name>
    <dbReference type="NCBI Taxonomy" id="287"/>
    <lineage>
        <taxon>Bacteria</taxon>
        <taxon>Pseudomonadati</taxon>
        <taxon>Pseudomonadota</taxon>
        <taxon>Gammaproteobacteria</taxon>
        <taxon>Pseudomonadales</taxon>
        <taxon>Pseudomonadaceae</taxon>
        <taxon>Pseudomonas</taxon>
    </lineage>
</organism>
<feature type="chain" id="PRO_0000173320" description="Chloramphenicol resistance protein">
    <location>
        <begin position="1"/>
        <end position="419"/>
    </location>
</feature>
<feature type="topological domain" description="Extracellular" evidence="1">
    <location>
        <begin position="1"/>
        <end position="9"/>
    </location>
</feature>
<feature type="transmembrane region" description="Helical; Name=1" evidence="1">
    <location>
        <begin position="10"/>
        <end position="30"/>
    </location>
</feature>
<feature type="topological domain" description="Cytoplasmic" evidence="1">
    <location>
        <begin position="31"/>
        <end position="46"/>
    </location>
</feature>
<feature type="transmembrane region" description="Helical; Name=2" evidence="1">
    <location>
        <begin position="47"/>
        <end position="67"/>
    </location>
</feature>
<feature type="topological domain" description="Extracellular" evidence="1">
    <location>
        <begin position="68"/>
        <end position="80"/>
    </location>
</feature>
<feature type="transmembrane region" description="Helical; Name=3" evidence="1">
    <location>
        <begin position="81"/>
        <end position="101"/>
    </location>
</feature>
<feature type="topological domain" description="Cytoplasmic" evidence="1">
    <location>
        <begin position="102"/>
        <end position="109"/>
    </location>
</feature>
<feature type="transmembrane region" description="Helical; Name=4" evidence="1">
    <location>
        <begin position="110"/>
        <end position="127"/>
    </location>
</feature>
<feature type="topological domain" description="Extracellular" evidence="1">
    <location>
        <begin position="128"/>
        <end position="141"/>
    </location>
</feature>
<feature type="transmembrane region" description="Helical; Name=5" evidence="1">
    <location>
        <begin position="142"/>
        <end position="162"/>
    </location>
</feature>
<feature type="topological domain" description="Cytoplasmic" evidence="1">
    <location>
        <begin position="163"/>
        <end position="169"/>
    </location>
</feature>
<feature type="transmembrane region" description="Helical; Name=6" evidence="1">
    <location>
        <begin position="170"/>
        <end position="187"/>
    </location>
</feature>
<feature type="topological domain" description="Extracellular" evidence="1">
    <location>
        <begin position="188"/>
        <end position="214"/>
    </location>
</feature>
<feature type="transmembrane region" description="Helical; Name=7" evidence="1">
    <location>
        <begin position="215"/>
        <end position="235"/>
    </location>
</feature>
<feature type="topological domain" description="Cytoplasmic" evidence="1">
    <location>
        <begin position="236"/>
        <end position="245"/>
    </location>
</feature>
<feature type="transmembrane region" description="Helical; Name=8" evidence="1">
    <location>
        <begin position="246"/>
        <end position="266"/>
    </location>
</feature>
<feature type="topological domain" description="Extracellular" evidence="1">
    <location>
        <begin position="267"/>
        <end position="279"/>
    </location>
</feature>
<feature type="transmembrane region" description="Helical; Name=9" evidence="1">
    <location>
        <begin position="280"/>
        <end position="299"/>
    </location>
</feature>
<feature type="topological domain" description="Cytoplasmic" evidence="1">
    <location>
        <begin position="300"/>
        <end position="306"/>
    </location>
</feature>
<feature type="transmembrane region" description="Helical; Name=10" evidence="1">
    <location>
        <begin position="307"/>
        <end position="327"/>
    </location>
</feature>
<feature type="topological domain" description="Extracellular" evidence="1">
    <location>
        <begin position="328"/>
        <end position="342"/>
    </location>
</feature>
<feature type="transmembrane region" description="Helical; Name=11" evidence="1">
    <location>
        <begin position="343"/>
        <end position="363"/>
    </location>
</feature>
<feature type="topological domain" description="Cytoplasmic" evidence="1">
    <location>
        <begin position="364"/>
        <end position="370"/>
    </location>
</feature>
<feature type="transmembrane region" description="Helical; Name=12" evidence="1">
    <location>
        <begin position="371"/>
        <end position="391"/>
    </location>
</feature>
<feature type="topological domain" description="Extracellular" evidence="1">
    <location>
        <begin position="392"/>
        <end position="419"/>
    </location>
</feature>
<feature type="sequence conflict" description="In Ref. 1; AAA26057." evidence="2" ref="1">
    <original>E</original>
    <variation>G</variation>
    <location>
        <position position="412"/>
    </location>
</feature>
<reference key="1">
    <citation type="journal article" date="1991" name="J. Bacteriol.">
        <title>Characterization of the nonenzymatic chloramphenicol resistance (cmlA) gene of the In4 integron of Tn1696: similarity of the product to transmembrane transport proteins.</title>
        <authorList>
            <person name="Bissonnette L."/>
            <person name="Champetier S."/>
            <person name="Buisson J.-P."/>
            <person name="Roy P.H."/>
        </authorList>
    </citation>
    <scope>NUCLEOTIDE SEQUENCE [GENOMIC DNA]</scope>
    <source>
        <transposon>Tn1696</transposon>
    </source>
</reference>
<reference key="2">
    <citation type="journal article" date="1991" name="Plasmid">
        <title>Sequence analysis of the inducible chloramphenicol resistance determinant in the Tn1696 integron suggests regulation by translational attenuation.</title>
        <authorList>
            <person name="Stokes H.W."/>
            <person name="Hall R.M."/>
        </authorList>
    </citation>
    <scope>NUCLEOTIDE SEQUENCE [GENOMIC DNA]</scope>
    <source>
        <transposon>Tn1696</transposon>
    </source>
</reference>
<reference key="3">
    <citation type="submission" date="2000-09" db="EMBL/GenBank/DDBJ databases">
        <authorList>
            <person name="Partridge S."/>
            <person name="Hall R.M."/>
        </authorList>
    </citation>
    <scope>SEQUENCE REVISION</scope>
</reference>
<name>CMLA_PSEAI</name>